<comment type="function">
    <text evidence="1">Photosystem II (PSII) is a light-driven water:plastoquinone oxidoreductase that uses light energy to abstract electrons from H(2)O, generating O(2) and a proton gradient subsequently used for ATP formation. It consists of a core antenna complex that captures photons, and an electron transfer chain that converts photonic excitation into a charge separation. The D1/D2 (PsbA/PsbD) reaction center heterodimer binds P680, the primary electron donor of PSII as well as several subsequent electron acceptors.</text>
</comment>
<comment type="catalytic activity">
    <reaction evidence="1">
        <text>2 a plastoquinone + 4 hnu + 2 H2O = 2 a plastoquinol + O2</text>
        <dbReference type="Rhea" id="RHEA:36359"/>
        <dbReference type="Rhea" id="RHEA-COMP:9561"/>
        <dbReference type="Rhea" id="RHEA-COMP:9562"/>
        <dbReference type="ChEBI" id="CHEBI:15377"/>
        <dbReference type="ChEBI" id="CHEBI:15379"/>
        <dbReference type="ChEBI" id="CHEBI:17757"/>
        <dbReference type="ChEBI" id="CHEBI:30212"/>
        <dbReference type="ChEBI" id="CHEBI:62192"/>
        <dbReference type="EC" id="1.10.3.9"/>
    </reaction>
</comment>
<comment type="cofactor">
    <text evidence="1">The D1/D2 heterodimer binds P680, chlorophylls that are the primary electron donor of PSII, and subsequent electron acceptors. It shares a non-heme iron and each subunit binds pheophytin, quinone, additional chlorophylls, carotenoids and lipids. D1 provides most of the ligands for the Mn4-Ca-O5 cluster of the oxygen-evolving complex (OEC). There is also a Cl(-1) ion associated with D1 and D2, which is required for oxygen evolution. The PSII complex binds additional chlorophylls, carotenoids and specific lipids.</text>
</comment>
<comment type="subunit">
    <text evidence="1">PSII is composed of 1 copy each of membrane proteins PsbA, PsbB, PsbC, PsbD, PsbE, PsbF, PsbH, PsbI, PsbJ, PsbK, PsbL, PsbM, PsbT, PsbX, PsbY, PsbZ, Psb30/Ycf12, at least 3 peripheral proteins of the oxygen-evolving complex and a large number of cofactors. It forms dimeric complexes.</text>
</comment>
<comment type="subcellular location">
    <subcellularLocation>
        <location evidence="1">Plastid</location>
        <location evidence="1">Chloroplast thylakoid membrane</location>
        <topology evidence="1">Multi-pass membrane protein</topology>
    </subcellularLocation>
</comment>
<comment type="PTM">
    <text evidence="1">Tyr-165 forms a radical intermediate that is referred to as redox-active TyrZ, YZ or Y-Z.</text>
</comment>
<comment type="miscellaneous">
    <text evidence="1">2 of the reaction center chlorophylls (ChlD1 and ChlD2) are entirely coordinated by water.</text>
</comment>
<comment type="miscellaneous">
    <text evidence="1">Herbicides such as atrazine, BNT, diuron or ioxynil bind in the Q(B) binding site and block subsequent electron transfer.</text>
</comment>
<comment type="similarity">
    <text evidence="1">Belongs to the reaction center PufL/M/PsbA/D family.</text>
</comment>
<gene>
    <name evidence="1" type="primary">psbA</name>
</gene>
<keyword id="KW-0106">Calcium</keyword>
<keyword id="KW-0148">Chlorophyll</keyword>
<keyword id="KW-0150">Chloroplast</keyword>
<keyword id="KW-0157">Chromophore</keyword>
<keyword id="KW-0249">Electron transport</keyword>
<keyword id="KW-0359">Herbicide resistance</keyword>
<keyword id="KW-0408">Iron</keyword>
<keyword id="KW-0460">Magnesium</keyword>
<keyword id="KW-0464">Manganese</keyword>
<keyword id="KW-0472">Membrane</keyword>
<keyword id="KW-0479">Metal-binding</keyword>
<keyword id="KW-0560">Oxidoreductase</keyword>
<keyword id="KW-0602">Photosynthesis</keyword>
<keyword id="KW-0604">Photosystem II</keyword>
<keyword id="KW-0934">Plastid</keyword>
<keyword id="KW-0793">Thylakoid</keyword>
<keyword id="KW-0812">Transmembrane</keyword>
<keyword id="KW-1133">Transmembrane helix</keyword>
<keyword id="KW-0813">Transport</keyword>
<name>PSBA_HETPY</name>
<accession>Q9MSC1</accession>
<dbReference type="EC" id="1.10.3.9" evidence="1"/>
<dbReference type="EMBL" id="AF206707">
    <property type="protein sequence ID" value="AAF89981.1"/>
    <property type="molecule type" value="Genomic_DNA"/>
</dbReference>
<dbReference type="EMBL" id="AY004261">
    <property type="protein sequence ID" value="AAG25876.1"/>
    <property type="molecule type" value="Genomic_DNA"/>
</dbReference>
<dbReference type="EMBL" id="AY033400">
    <property type="protein sequence ID" value="AAK54390.1"/>
    <property type="molecule type" value="Genomic_DNA"/>
</dbReference>
<dbReference type="SMR" id="Q9MSC1"/>
<dbReference type="GO" id="GO:0009535">
    <property type="term" value="C:chloroplast thylakoid membrane"/>
    <property type="evidence" value="ECO:0007669"/>
    <property type="project" value="UniProtKB-SubCell"/>
</dbReference>
<dbReference type="GO" id="GO:0009523">
    <property type="term" value="C:photosystem II"/>
    <property type="evidence" value="ECO:0007669"/>
    <property type="project" value="UniProtKB-KW"/>
</dbReference>
<dbReference type="GO" id="GO:0016168">
    <property type="term" value="F:chlorophyll binding"/>
    <property type="evidence" value="ECO:0007669"/>
    <property type="project" value="UniProtKB-UniRule"/>
</dbReference>
<dbReference type="GO" id="GO:0045156">
    <property type="term" value="F:electron transporter, transferring electrons within the cyclic electron transport pathway of photosynthesis activity"/>
    <property type="evidence" value="ECO:0007669"/>
    <property type="project" value="InterPro"/>
</dbReference>
<dbReference type="GO" id="GO:0005506">
    <property type="term" value="F:iron ion binding"/>
    <property type="evidence" value="ECO:0007669"/>
    <property type="project" value="UniProtKB-UniRule"/>
</dbReference>
<dbReference type="GO" id="GO:0016682">
    <property type="term" value="F:oxidoreductase activity, acting on diphenols and related substances as donors, oxygen as acceptor"/>
    <property type="evidence" value="ECO:0007669"/>
    <property type="project" value="UniProtKB-UniRule"/>
</dbReference>
<dbReference type="GO" id="GO:0009772">
    <property type="term" value="P:photosynthetic electron transport in photosystem II"/>
    <property type="evidence" value="ECO:0007669"/>
    <property type="project" value="InterPro"/>
</dbReference>
<dbReference type="GO" id="GO:0009635">
    <property type="term" value="P:response to herbicide"/>
    <property type="evidence" value="ECO:0007669"/>
    <property type="project" value="UniProtKB-KW"/>
</dbReference>
<dbReference type="Gene3D" id="1.20.85.10">
    <property type="entry name" value="Photosystem II protein D1-like"/>
    <property type="match status" value="1"/>
</dbReference>
<dbReference type="HAMAP" id="MF_01379">
    <property type="entry name" value="PSII_PsbA_D1"/>
    <property type="match status" value="1"/>
</dbReference>
<dbReference type="InterPro" id="IPR055266">
    <property type="entry name" value="D1/D2"/>
</dbReference>
<dbReference type="InterPro" id="IPR036854">
    <property type="entry name" value="Photo_II_D1/D2_sf"/>
</dbReference>
<dbReference type="InterPro" id="IPR000484">
    <property type="entry name" value="Photo_RC_L/M"/>
</dbReference>
<dbReference type="InterPro" id="IPR055265">
    <property type="entry name" value="Photo_RC_L/M_CS"/>
</dbReference>
<dbReference type="InterPro" id="IPR005867">
    <property type="entry name" value="PSII_D1"/>
</dbReference>
<dbReference type="NCBIfam" id="TIGR01151">
    <property type="entry name" value="psbA"/>
    <property type="match status" value="1"/>
</dbReference>
<dbReference type="PANTHER" id="PTHR33149:SF12">
    <property type="entry name" value="PHOTOSYSTEM II D2 PROTEIN"/>
    <property type="match status" value="1"/>
</dbReference>
<dbReference type="PANTHER" id="PTHR33149">
    <property type="entry name" value="PHOTOSYSTEM II PROTEIN D1"/>
    <property type="match status" value="1"/>
</dbReference>
<dbReference type="Pfam" id="PF00124">
    <property type="entry name" value="Photo_RC"/>
    <property type="match status" value="1"/>
</dbReference>
<dbReference type="SUPFAM" id="SSF81483">
    <property type="entry name" value="Bacterial photosystem II reaction centre, L and M subunits"/>
    <property type="match status" value="1"/>
</dbReference>
<dbReference type="PROSITE" id="PS00244">
    <property type="entry name" value="REACTION_CENTER"/>
    <property type="match status" value="1"/>
</dbReference>
<organism>
    <name type="scientific">Heterocapsa pygmaea</name>
    <name type="common">Dinoflagellate</name>
    <dbReference type="NCBI Taxonomy" id="35672"/>
    <lineage>
        <taxon>Eukaryota</taxon>
        <taxon>Sar</taxon>
        <taxon>Alveolata</taxon>
        <taxon>Dinophyceae</taxon>
        <taxon>Peridiniales</taxon>
        <taxon>Heterocapsaceae</taxon>
        <taxon>Heterocapsa</taxon>
    </lineage>
</organism>
<reference key="1">
    <citation type="journal article" date="2000" name="J. Mol. Evol.">
        <title>Phylogeny of ultra-rapidly evolving dinoflagellate chloroplast genes: a possible common origin for sporozoan and dinoflagellate plastids.</title>
        <authorList>
            <person name="Zhang Z."/>
            <person name="Green B.R."/>
            <person name="Cavalier-Smith T."/>
        </authorList>
    </citation>
    <scope>NUCLEOTIDE SEQUENCE [GENOMIC DNA]</scope>
    <source>
        <strain>CCMP1490</strain>
    </source>
</reference>
<reference key="2">
    <citation type="journal article" date="2002" name="Mol. Biol. Evol.">
        <title>Evolution of dinoflagellate unigenic minicircles and the partially concerted divergence of their putative replicon origins.</title>
        <authorList>
            <person name="Zhang Z."/>
            <person name="Cavalier-Smith T."/>
            <person name="Green B.R."/>
        </authorList>
    </citation>
    <scope>NUCLEOTIDE SEQUENCE [GENOMIC DNA]</scope>
    <source>
        <strain>CCMP1490</strain>
    </source>
</reference>
<proteinExistence type="inferred from homology"/>
<feature type="chain" id="PRO_0000316497" description="Photosystem II protein D1" evidence="1">
    <location>
        <begin position="1"/>
        <end position="348"/>
    </location>
</feature>
<feature type="transmembrane region" description="Helical" evidence="1">
    <location>
        <begin position="33"/>
        <end position="50"/>
    </location>
</feature>
<feature type="transmembrane region" description="Helical" evidence="1">
    <location>
        <begin position="122"/>
        <end position="137"/>
    </location>
</feature>
<feature type="transmembrane region" description="Helical" evidence="1">
    <location>
        <begin position="146"/>
        <end position="160"/>
    </location>
</feature>
<feature type="transmembrane region" description="Helical" evidence="1">
    <location>
        <begin position="201"/>
        <end position="222"/>
    </location>
</feature>
<feature type="transmembrane region" description="Helical" evidence="1">
    <location>
        <begin position="278"/>
        <end position="292"/>
    </location>
</feature>
<feature type="binding site" description="axial binding residue" evidence="1">
    <location>
        <position position="122"/>
    </location>
    <ligand>
        <name>chlorophyll a</name>
        <dbReference type="ChEBI" id="CHEBI:58416"/>
        <label>ChlzD1</label>
    </ligand>
    <ligandPart>
        <name>Mg</name>
        <dbReference type="ChEBI" id="CHEBI:25107"/>
    </ligandPart>
</feature>
<feature type="binding site" evidence="1">
    <location>
        <position position="130"/>
    </location>
    <ligand>
        <name>pheophytin a</name>
        <dbReference type="ChEBI" id="CHEBI:136840"/>
        <label>D1</label>
    </ligand>
</feature>
<feature type="binding site" evidence="1">
    <location>
        <position position="174"/>
    </location>
    <ligand>
        <name>[CaMn4O5] cluster</name>
        <dbReference type="ChEBI" id="CHEBI:189552"/>
    </ligand>
</feature>
<feature type="binding site" evidence="1">
    <location>
        <position position="193"/>
    </location>
    <ligand>
        <name>[CaMn4O5] cluster</name>
        <dbReference type="ChEBI" id="CHEBI:189552"/>
    </ligand>
</feature>
<feature type="binding site" description="axial binding residue" evidence="1">
    <location>
        <position position="202"/>
    </location>
    <ligand>
        <name>chlorophyll a</name>
        <dbReference type="ChEBI" id="CHEBI:58416"/>
        <label>PD1</label>
    </ligand>
    <ligandPart>
        <name>Mg</name>
        <dbReference type="ChEBI" id="CHEBI:25107"/>
    </ligandPart>
</feature>
<feature type="binding site" evidence="1">
    <location>
        <position position="219"/>
    </location>
    <ligand>
        <name>a quinone</name>
        <dbReference type="ChEBI" id="CHEBI:132124"/>
        <label>B</label>
    </ligand>
</feature>
<feature type="binding site" evidence="1">
    <location>
        <position position="219"/>
    </location>
    <ligand>
        <name>Fe cation</name>
        <dbReference type="ChEBI" id="CHEBI:24875"/>
        <note>ligand shared with heterodimeric partner</note>
    </ligand>
</feature>
<feature type="binding site" evidence="1">
    <location>
        <begin position="268"/>
        <end position="269"/>
    </location>
    <ligand>
        <name>a quinone</name>
        <dbReference type="ChEBI" id="CHEBI:132124"/>
        <label>B</label>
    </ligand>
</feature>
<feature type="binding site" evidence="1">
    <location>
        <position position="276"/>
    </location>
    <ligand>
        <name>Fe cation</name>
        <dbReference type="ChEBI" id="CHEBI:24875"/>
        <note>ligand shared with heterodimeric partner</note>
    </ligand>
</feature>
<feature type="binding site" evidence="1">
    <location>
        <position position="336"/>
    </location>
    <ligand>
        <name>[CaMn4O5] cluster</name>
        <dbReference type="ChEBI" id="CHEBI:189552"/>
    </ligand>
</feature>
<feature type="binding site" evidence="1">
    <location>
        <position position="337"/>
    </location>
    <ligand>
        <name>[CaMn4O5] cluster</name>
        <dbReference type="ChEBI" id="CHEBI:189552"/>
    </ligand>
</feature>
<feature type="binding site" evidence="1">
    <location>
        <position position="346"/>
    </location>
    <ligand>
        <name>[CaMn4O5] cluster</name>
        <dbReference type="ChEBI" id="CHEBI:189552"/>
    </ligand>
</feature>
<feature type="binding site" evidence="1">
    <location>
        <position position="348"/>
    </location>
    <ligand>
        <name>[CaMn4O5] cluster</name>
        <dbReference type="ChEBI" id="CHEBI:189552"/>
    </ligand>
</feature>
<feature type="site" description="Tyrosine radical intermediate" evidence="1">
    <location>
        <position position="165"/>
    </location>
</feature>
<feature type="site" description="Stabilizes free radical intermediate" evidence="1">
    <location>
        <position position="194"/>
    </location>
</feature>
<sequence length="348" mass="38140">MKNTFNTSNVFANAYSFWGYVIGFILSTSNRLYIGWFGILMFPLLVLATVAYIAAFIFAPPVDIDGIREPVAGALLYGNNIISGAVIPSSNAIGVHFYPVWEALGFDEWLYNGGTYQFVVLHFILGAGAYMGREWEFAFRLGMRPWIFVAFSAPLVAASAVFIVYPIGQGSFSDGMPLGISGTFNFMLVFQAEHNILMHPFHILGVAAVFGGSLFSAMHGSLVTSSLVAETAGDLSLNVGYNFGQEDETYSISAAHGYFGRLIFQYASFNNSRSLHFFLAAWPVIGIWFTALGVSTMAFNLNGLNFNQSIIDSSGHLINSWADIVNRADLGMEVMHERNAHNFPLDLA</sequence>
<evidence type="ECO:0000255" key="1">
    <source>
        <dbReference type="HAMAP-Rule" id="MF_01379"/>
    </source>
</evidence>
<geneLocation type="chloroplast"/>
<protein>
    <recommendedName>
        <fullName evidence="1">Photosystem II protein D1</fullName>
        <shortName evidence="1">PSII D1 protein</shortName>
        <ecNumber evidence="1">1.10.3.9</ecNumber>
    </recommendedName>
    <alternativeName>
        <fullName evidence="1">Photosystem II Q(B) protein</fullName>
    </alternativeName>
</protein>